<organism>
    <name type="scientific">Shigella flexneri serotype 5b (strain 8401)</name>
    <dbReference type="NCBI Taxonomy" id="373384"/>
    <lineage>
        <taxon>Bacteria</taxon>
        <taxon>Pseudomonadati</taxon>
        <taxon>Pseudomonadota</taxon>
        <taxon>Gammaproteobacteria</taxon>
        <taxon>Enterobacterales</taxon>
        <taxon>Enterobacteriaceae</taxon>
        <taxon>Shigella</taxon>
    </lineage>
</organism>
<evidence type="ECO:0000255" key="1">
    <source>
        <dbReference type="HAMAP-Rule" id="MF_01162"/>
    </source>
</evidence>
<dbReference type="EC" id="2.3.1.40" evidence="1"/>
<dbReference type="EC" id="6.2.1.20" evidence="1"/>
<dbReference type="EMBL" id="CP000266">
    <property type="protein sequence ID" value="ABF04987.1"/>
    <property type="molecule type" value="Genomic_DNA"/>
</dbReference>
<dbReference type="RefSeq" id="WP_000899047.1">
    <property type="nucleotide sequence ID" value="NC_008258.1"/>
</dbReference>
<dbReference type="SMR" id="Q0T128"/>
<dbReference type="KEGG" id="sfv:SFV_2914"/>
<dbReference type="HOGENOM" id="CLU_000022_59_8_6"/>
<dbReference type="Proteomes" id="UP000000659">
    <property type="component" value="Chromosome"/>
</dbReference>
<dbReference type="GO" id="GO:0005886">
    <property type="term" value="C:plasma membrane"/>
    <property type="evidence" value="ECO:0007669"/>
    <property type="project" value="UniProtKB-SubCell"/>
</dbReference>
<dbReference type="GO" id="GO:0008779">
    <property type="term" value="F:acyl-[acyl-carrier-protein]-phospholipid O-acyltransferase activity"/>
    <property type="evidence" value="ECO:0007669"/>
    <property type="project" value="UniProtKB-UniRule"/>
</dbReference>
<dbReference type="GO" id="GO:0005524">
    <property type="term" value="F:ATP binding"/>
    <property type="evidence" value="ECO:0007669"/>
    <property type="project" value="UniProtKB-KW"/>
</dbReference>
<dbReference type="GO" id="GO:0008922">
    <property type="term" value="F:long-chain fatty acid [acyl-carrier-protein] ligase activity"/>
    <property type="evidence" value="ECO:0007669"/>
    <property type="project" value="UniProtKB-UniRule"/>
</dbReference>
<dbReference type="GO" id="GO:0031956">
    <property type="term" value="F:medium-chain fatty acid-CoA ligase activity"/>
    <property type="evidence" value="ECO:0007669"/>
    <property type="project" value="TreeGrafter"/>
</dbReference>
<dbReference type="GO" id="GO:0006631">
    <property type="term" value="P:fatty acid metabolic process"/>
    <property type="evidence" value="ECO:0007669"/>
    <property type="project" value="InterPro"/>
</dbReference>
<dbReference type="GO" id="GO:0008654">
    <property type="term" value="P:phospholipid biosynthetic process"/>
    <property type="evidence" value="ECO:0007669"/>
    <property type="project" value="InterPro"/>
</dbReference>
<dbReference type="CDD" id="cd05909">
    <property type="entry name" value="AAS_C"/>
    <property type="match status" value="1"/>
</dbReference>
<dbReference type="CDD" id="cd07989">
    <property type="entry name" value="LPLAT_AGPAT-like"/>
    <property type="match status" value="1"/>
</dbReference>
<dbReference type="FunFam" id="3.30.300.30:FF:000009">
    <property type="entry name" value="Bifunctional protein Aas"/>
    <property type="match status" value="1"/>
</dbReference>
<dbReference type="FunFam" id="3.40.50.12780:FF:000009">
    <property type="entry name" value="Bifunctional protein Aas"/>
    <property type="match status" value="1"/>
</dbReference>
<dbReference type="Gene3D" id="3.30.300.30">
    <property type="match status" value="1"/>
</dbReference>
<dbReference type="Gene3D" id="3.40.50.12780">
    <property type="entry name" value="N-terminal domain of ligase-like"/>
    <property type="match status" value="1"/>
</dbReference>
<dbReference type="HAMAP" id="MF_01162">
    <property type="entry name" value="Aas"/>
    <property type="match status" value="1"/>
</dbReference>
<dbReference type="InterPro" id="IPR023775">
    <property type="entry name" value="Aas"/>
</dbReference>
<dbReference type="InterPro" id="IPR045851">
    <property type="entry name" value="AMP-bd_C_sf"/>
</dbReference>
<dbReference type="InterPro" id="IPR020845">
    <property type="entry name" value="AMP-binding_CS"/>
</dbReference>
<dbReference type="InterPro" id="IPR000873">
    <property type="entry name" value="AMP-dep_synth/lig_dom"/>
</dbReference>
<dbReference type="InterPro" id="IPR042099">
    <property type="entry name" value="ANL_N_sf"/>
</dbReference>
<dbReference type="InterPro" id="IPR002123">
    <property type="entry name" value="Plipid/glycerol_acylTrfase"/>
</dbReference>
<dbReference type="NCBIfam" id="NF005959">
    <property type="entry name" value="PRK08043.1"/>
    <property type="match status" value="1"/>
</dbReference>
<dbReference type="PANTHER" id="PTHR43201">
    <property type="entry name" value="ACYL-COA SYNTHETASE"/>
    <property type="match status" value="1"/>
</dbReference>
<dbReference type="PANTHER" id="PTHR43201:SF8">
    <property type="entry name" value="ACYL-COA SYNTHETASE FAMILY MEMBER 3"/>
    <property type="match status" value="1"/>
</dbReference>
<dbReference type="Pfam" id="PF01553">
    <property type="entry name" value="Acyltransferase"/>
    <property type="match status" value="1"/>
</dbReference>
<dbReference type="Pfam" id="PF00501">
    <property type="entry name" value="AMP-binding"/>
    <property type="match status" value="1"/>
</dbReference>
<dbReference type="SMART" id="SM00563">
    <property type="entry name" value="PlsC"/>
    <property type="match status" value="1"/>
</dbReference>
<dbReference type="SUPFAM" id="SSF56801">
    <property type="entry name" value="Acetyl-CoA synthetase-like"/>
    <property type="match status" value="1"/>
</dbReference>
<dbReference type="SUPFAM" id="SSF69593">
    <property type="entry name" value="Glycerol-3-phosphate (1)-acyltransferase"/>
    <property type="match status" value="1"/>
</dbReference>
<dbReference type="PROSITE" id="PS00455">
    <property type="entry name" value="AMP_BINDING"/>
    <property type="match status" value="1"/>
</dbReference>
<gene>
    <name evidence="1" type="primary">aas</name>
    <name type="ordered locus">SFV_2914</name>
</gene>
<keyword id="KW-0012">Acyltransferase</keyword>
<keyword id="KW-0067">ATP-binding</keyword>
<keyword id="KW-0997">Cell inner membrane</keyword>
<keyword id="KW-1003">Cell membrane</keyword>
<keyword id="KW-0436">Ligase</keyword>
<keyword id="KW-0472">Membrane</keyword>
<keyword id="KW-0511">Multifunctional enzyme</keyword>
<keyword id="KW-0547">Nucleotide-binding</keyword>
<keyword id="KW-0808">Transferase</keyword>
<keyword id="KW-0812">Transmembrane</keyword>
<keyword id="KW-1133">Transmembrane helix</keyword>
<proteinExistence type="inferred from homology"/>
<feature type="chain" id="PRO_1000065643" description="Bifunctional protein Aas">
    <location>
        <begin position="1"/>
        <end position="719"/>
    </location>
</feature>
<feature type="transmembrane region" description="Helical" evidence="1">
    <location>
        <begin position="258"/>
        <end position="277"/>
    </location>
</feature>
<feature type="transmembrane region" description="Helical" evidence="1">
    <location>
        <begin position="409"/>
        <end position="433"/>
    </location>
</feature>
<feature type="region of interest" description="Acyltransferase">
    <location>
        <begin position="15"/>
        <end position="138"/>
    </location>
</feature>
<feature type="region of interest" description="AMP-binding">
    <location>
        <begin position="233"/>
        <end position="646"/>
    </location>
</feature>
<feature type="active site" evidence="1">
    <location>
        <position position="36"/>
    </location>
</feature>
<protein>
    <recommendedName>
        <fullName evidence="1">Bifunctional protein Aas</fullName>
    </recommendedName>
    <domain>
        <recommendedName>
            <fullName evidence="1">2-acylglycerophosphoethanolamine acyltransferase</fullName>
            <ecNumber evidence="1">2.3.1.40</ecNumber>
        </recommendedName>
        <alternativeName>
            <fullName evidence="1">2-acyl-GPE acyltransferase</fullName>
        </alternativeName>
        <alternativeName>
            <fullName evidence="1">Acyl-[acyl-carrier-protein]--phospholipid O-acyltransferase</fullName>
        </alternativeName>
    </domain>
    <domain>
        <recommendedName>
            <fullName evidence="1">Acyl-[acyl-carrier-protein] synthetase</fullName>
            <ecNumber evidence="1">6.2.1.20</ecNumber>
        </recommendedName>
        <alternativeName>
            <fullName evidence="1">Acyl-ACP synthetase</fullName>
        </alternativeName>
        <alternativeName>
            <fullName evidence="1">Long-chain-fatty-acid--[acyl-carrier-protein] ligase</fullName>
        </alternativeName>
    </domain>
</protein>
<accession>Q0T128</accession>
<reference key="1">
    <citation type="journal article" date="2006" name="BMC Genomics">
        <title>Complete genome sequence of Shigella flexneri 5b and comparison with Shigella flexneri 2a.</title>
        <authorList>
            <person name="Nie H."/>
            <person name="Yang F."/>
            <person name="Zhang X."/>
            <person name="Yang J."/>
            <person name="Chen L."/>
            <person name="Wang J."/>
            <person name="Xiong Z."/>
            <person name="Peng J."/>
            <person name="Sun L."/>
            <person name="Dong J."/>
            <person name="Xue Y."/>
            <person name="Xu X."/>
            <person name="Chen S."/>
            <person name="Yao Z."/>
            <person name="Shen Y."/>
            <person name="Jin Q."/>
        </authorList>
    </citation>
    <scope>NUCLEOTIDE SEQUENCE [LARGE SCALE GENOMIC DNA]</scope>
    <source>
        <strain>8401</strain>
    </source>
</reference>
<sequence length="719" mass="80668">MLFSFFRNLCRVLYRVRVTGDTQALKGERVLITPNHVSFIDGILLGLFLPVRPVFAVYTSISQQWYMRWLKSFIDFVPLDPTQPMAIKHLVRLVEQGRPVVIFPEGRITTTGSLMKIYDGAGFVAAKSGATVIPVRIEGAELTHFSRLKGLVKRRLFPQITLHILPPTQVAMPDAPRARDRRKIAGEMLHQIMMEARMAVRPRETLYESLLSAMYRFGAGKKCVEDVNFTPDSYRKLLTKTLFVGRILEKYSVEGERIGLMLPNAGISAAVIFGAIARRRIPAMMNYTAGVKGLTSAITAAEIKTIFTSRQFLDKGKLWHLPEQLTQVRWVYLEDLKADVTTADKVWIFAHLLMPRLAQVKQQPEEEALILFTSGSEGHPKGVVHSHKSILANVEQIKTIADFTTNDRFMSALPLFHSFGLTVGLFTPLLTGAEVFLYPSPLHYRIVPDLVYDRSCTVLFGTSTFLGHYARFANPYDFYRLRYVVAGAEKLQESTKQLWQDKFGLRILEGYGVTECAPVVSINVPMAAKPGTVGRILPGMDARLLSVPGIEEGGRLQLKGPNIMNGYLRVEKPGVLEVPTAENVRGEMERGWYDTGDIVRFDEQGFVQIQGRAKRFAKIAGEMVSLEMVEQLALGVSPDKVHATAIKSDASKGEALVLFTTDNELTRDKLQQYAREHGVPELAVPRDIRYLKQMPLLGSGKPDFVTLKSWVDEAEQHDE</sequence>
<comment type="function">
    <text evidence="1">Plays a role in lysophospholipid acylation. Transfers fatty acids to the 1-position via an enzyme-bound acyl-ACP intermediate in the presence of ATP and magnesium. Its physiological function is to regenerate phosphatidylethanolamine from 2-acyl-glycero-3-phosphoethanolamine (2-acyl-GPE) formed by transacylation reactions or degradation by phospholipase A1.</text>
</comment>
<comment type="catalytic activity">
    <reaction evidence="1">
        <text>a 2-acyl-sn-glycero-3-phosphoethanolamine + a fatty acyl-[ACP] = a 1,2-diacyl-sn-glycero-3-phosphoethanolamine + holo-[ACP]</text>
        <dbReference type="Rhea" id="RHEA:10304"/>
        <dbReference type="Rhea" id="RHEA-COMP:9685"/>
        <dbReference type="Rhea" id="RHEA-COMP:14125"/>
        <dbReference type="ChEBI" id="CHEBI:64479"/>
        <dbReference type="ChEBI" id="CHEBI:64612"/>
        <dbReference type="ChEBI" id="CHEBI:65213"/>
        <dbReference type="ChEBI" id="CHEBI:138651"/>
        <dbReference type="EC" id="2.3.1.40"/>
    </reaction>
</comment>
<comment type="catalytic activity">
    <reaction evidence="1">
        <text>a long-chain fatty acid + holo-[ACP] + ATP = a long-chain fatty acyl-[ACP] + AMP + diphosphate</text>
        <dbReference type="Rhea" id="RHEA:45588"/>
        <dbReference type="Rhea" id="RHEA-COMP:9685"/>
        <dbReference type="Rhea" id="RHEA-COMP:12682"/>
        <dbReference type="ChEBI" id="CHEBI:30616"/>
        <dbReference type="ChEBI" id="CHEBI:33019"/>
        <dbReference type="ChEBI" id="CHEBI:57560"/>
        <dbReference type="ChEBI" id="CHEBI:64479"/>
        <dbReference type="ChEBI" id="CHEBI:133243"/>
        <dbReference type="ChEBI" id="CHEBI:456215"/>
        <dbReference type="EC" id="6.2.1.20"/>
    </reaction>
</comment>
<comment type="subcellular location">
    <subcellularLocation>
        <location evidence="1">Cell inner membrane</location>
        <topology evidence="1">Multi-pass membrane protein</topology>
    </subcellularLocation>
</comment>
<comment type="similarity">
    <text evidence="1">In the N-terminal section; belongs to the 2-acyl-GPE acetyltransferase family.</text>
</comment>
<comment type="similarity">
    <text evidence="1">In the C-terminal section; belongs to the ATP-dependent AMP-binding enzyme family.</text>
</comment>
<name>AAS_SHIF8</name>